<dbReference type="EMBL" id="AM933173">
    <property type="protein sequence ID" value="CAR39777.1"/>
    <property type="molecule type" value="Genomic_DNA"/>
</dbReference>
<dbReference type="RefSeq" id="WP_000644742.1">
    <property type="nucleotide sequence ID" value="NC_011274.1"/>
</dbReference>
<dbReference type="SMR" id="B5RH23"/>
<dbReference type="GeneID" id="93035739"/>
<dbReference type="KEGG" id="seg:SG4007"/>
<dbReference type="HOGENOM" id="CLU_158491_1_2_6"/>
<dbReference type="Proteomes" id="UP000008321">
    <property type="component" value="Chromosome"/>
</dbReference>
<dbReference type="GO" id="GO:0022625">
    <property type="term" value="C:cytosolic large ribosomal subunit"/>
    <property type="evidence" value="ECO:0007669"/>
    <property type="project" value="TreeGrafter"/>
</dbReference>
<dbReference type="GO" id="GO:0003735">
    <property type="term" value="F:structural constituent of ribosome"/>
    <property type="evidence" value="ECO:0007669"/>
    <property type="project" value="InterPro"/>
</dbReference>
<dbReference type="GO" id="GO:0006412">
    <property type="term" value="P:translation"/>
    <property type="evidence" value="ECO:0007669"/>
    <property type="project" value="UniProtKB-UniRule"/>
</dbReference>
<dbReference type="CDD" id="cd00427">
    <property type="entry name" value="Ribosomal_L29_HIP"/>
    <property type="match status" value="1"/>
</dbReference>
<dbReference type="Gene3D" id="6.10.140.1970">
    <property type="match status" value="1"/>
</dbReference>
<dbReference type="HAMAP" id="MF_00374">
    <property type="entry name" value="Ribosomal_uL29"/>
    <property type="match status" value="1"/>
</dbReference>
<dbReference type="InterPro" id="IPR050063">
    <property type="entry name" value="Ribosomal_protein_uL29"/>
</dbReference>
<dbReference type="InterPro" id="IPR001854">
    <property type="entry name" value="Ribosomal_uL29"/>
</dbReference>
<dbReference type="InterPro" id="IPR018254">
    <property type="entry name" value="Ribosomal_uL29_CS"/>
</dbReference>
<dbReference type="InterPro" id="IPR036049">
    <property type="entry name" value="Ribosomal_uL29_sf"/>
</dbReference>
<dbReference type="NCBIfam" id="TIGR00012">
    <property type="entry name" value="L29"/>
    <property type="match status" value="1"/>
</dbReference>
<dbReference type="PANTHER" id="PTHR10916">
    <property type="entry name" value="60S RIBOSOMAL PROTEIN L35/50S RIBOSOMAL PROTEIN L29"/>
    <property type="match status" value="1"/>
</dbReference>
<dbReference type="PANTHER" id="PTHR10916:SF0">
    <property type="entry name" value="LARGE RIBOSOMAL SUBUNIT PROTEIN UL29C"/>
    <property type="match status" value="1"/>
</dbReference>
<dbReference type="Pfam" id="PF00831">
    <property type="entry name" value="Ribosomal_L29"/>
    <property type="match status" value="1"/>
</dbReference>
<dbReference type="SUPFAM" id="SSF46561">
    <property type="entry name" value="Ribosomal protein L29 (L29p)"/>
    <property type="match status" value="1"/>
</dbReference>
<dbReference type="PROSITE" id="PS00579">
    <property type="entry name" value="RIBOSOMAL_L29"/>
    <property type="match status" value="1"/>
</dbReference>
<comment type="similarity">
    <text evidence="1">Belongs to the universal ribosomal protein uL29 family.</text>
</comment>
<evidence type="ECO:0000255" key="1">
    <source>
        <dbReference type="HAMAP-Rule" id="MF_00374"/>
    </source>
</evidence>
<evidence type="ECO:0000305" key="2"/>
<accession>B5RH23</accession>
<name>RL29_SALG2</name>
<sequence>MKAKELREKSVEELNTELLNLLREQFNLRMQAASGQLQQSHLLKQVRRDVARVKTLLTEKAGA</sequence>
<keyword id="KW-0687">Ribonucleoprotein</keyword>
<keyword id="KW-0689">Ribosomal protein</keyword>
<proteinExistence type="inferred from homology"/>
<organism>
    <name type="scientific">Salmonella gallinarum (strain 287/91 / NCTC 13346)</name>
    <dbReference type="NCBI Taxonomy" id="550538"/>
    <lineage>
        <taxon>Bacteria</taxon>
        <taxon>Pseudomonadati</taxon>
        <taxon>Pseudomonadota</taxon>
        <taxon>Gammaproteobacteria</taxon>
        <taxon>Enterobacterales</taxon>
        <taxon>Enterobacteriaceae</taxon>
        <taxon>Salmonella</taxon>
    </lineage>
</organism>
<protein>
    <recommendedName>
        <fullName evidence="1">Large ribosomal subunit protein uL29</fullName>
    </recommendedName>
    <alternativeName>
        <fullName evidence="2">50S ribosomal protein L29</fullName>
    </alternativeName>
</protein>
<reference key="1">
    <citation type="journal article" date="2008" name="Genome Res.">
        <title>Comparative genome analysis of Salmonella enteritidis PT4 and Salmonella gallinarum 287/91 provides insights into evolutionary and host adaptation pathways.</title>
        <authorList>
            <person name="Thomson N.R."/>
            <person name="Clayton D.J."/>
            <person name="Windhorst D."/>
            <person name="Vernikos G."/>
            <person name="Davidson S."/>
            <person name="Churcher C."/>
            <person name="Quail M.A."/>
            <person name="Stevens M."/>
            <person name="Jones M.A."/>
            <person name="Watson M."/>
            <person name="Barron A."/>
            <person name="Layton A."/>
            <person name="Pickard D."/>
            <person name="Kingsley R.A."/>
            <person name="Bignell A."/>
            <person name="Clark L."/>
            <person name="Harris B."/>
            <person name="Ormond D."/>
            <person name="Abdellah Z."/>
            <person name="Brooks K."/>
            <person name="Cherevach I."/>
            <person name="Chillingworth T."/>
            <person name="Woodward J."/>
            <person name="Norberczak H."/>
            <person name="Lord A."/>
            <person name="Arrowsmith C."/>
            <person name="Jagels K."/>
            <person name="Moule S."/>
            <person name="Mungall K."/>
            <person name="Saunders M."/>
            <person name="Whitehead S."/>
            <person name="Chabalgoity J.A."/>
            <person name="Maskell D."/>
            <person name="Humphreys T."/>
            <person name="Roberts M."/>
            <person name="Barrow P.A."/>
            <person name="Dougan G."/>
            <person name="Parkhill J."/>
        </authorList>
    </citation>
    <scope>NUCLEOTIDE SEQUENCE [LARGE SCALE GENOMIC DNA]</scope>
    <source>
        <strain>287/91 / NCTC 13346</strain>
    </source>
</reference>
<gene>
    <name evidence="1" type="primary">rpmC</name>
    <name type="ordered locus">SG4007</name>
</gene>
<feature type="chain" id="PRO_1000121811" description="Large ribosomal subunit protein uL29">
    <location>
        <begin position="1"/>
        <end position="63"/>
    </location>
</feature>